<dbReference type="EC" id="3.4.23.36" evidence="1"/>
<dbReference type="EMBL" id="CP000010">
    <property type="protein sequence ID" value="AAU50244.1"/>
    <property type="molecule type" value="Genomic_DNA"/>
</dbReference>
<dbReference type="RefSeq" id="WP_004186086.1">
    <property type="nucleotide sequence ID" value="NC_006348.1"/>
</dbReference>
<dbReference type="RefSeq" id="YP_103807.1">
    <property type="nucleotide sequence ID" value="NC_006348.1"/>
</dbReference>
<dbReference type="SMR" id="Q62HL3"/>
<dbReference type="GeneID" id="93059418"/>
<dbReference type="KEGG" id="bma:BMA2243"/>
<dbReference type="PATRIC" id="fig|243160.12.peg.2308"/>
<dbReference type="eggNOG" id="COG0597">
    <property type="taxonomic scope" value="Bacteria"/>
</dbReference>
<dbReference type="HOGENOM" id="CLU_083252_4_0_4"/>
<dbReference type="UniPathway" id="UPA00665"/>
<dbReference type="Proteomes" id="UP000006693">
    <property type="component" value="Chromosome 1"/>
</dbReference>
<dbReference type="GO" id="GO:0005886">
    <property type="term" value="C:plasma membrane"/>
    <property type="evidence" value="ECO:0007669"/>
    <property type="project" value="UniProtKB-SubCell"/>
</dbReference>
<dbReference type="GO" id="GO:0004190">
    <property type="term" value="F:aspartic-type endopeptidase activity"/>
    <property type="evidence" value="ECO:0007669"/>
    <property type="project" value="UniProtKB-UniRule"/>
</dbReference>
<dbReference type="GO" id="GO:0006508">
    <property type="term" value="P:proteolysis"/>
    <property type="evidence" value="ECO:0007669"/>
    <property type="project" value="UniProtKB-KW"/>
</dbReference>
<dbReference type="HAMAP" id="MF_00161">
    <property type="entry name" value="LspA"/>
    <property type="match status" value="1"/>
</dbReference>
<dbReference type="InterPro" id="IPR001872">
    <property type="entry name" value="Peptidase_A8"/>
</dbReference>
<dbReference type="NCBIfam" id="TIGR00077">
    <property type="entry name" value="lspA"/>
    <property type="match status" value="1"/>
</dbReference>
<dbReference type="PANTHER" id="PTHR33695">
    <property type="entry name" value="LIPOPROTEIN SIGNAL PEPTIDASE"/>
    <property type="match status" value="1"/>
</dbReference>
<dbReference type="PANTHER" id="PTHR33695:SF1">
    <property type="entry name" value="LIPOPROTEIN SIGNAL PEPTIDASE"/>
    <property type="match status" value="1"/>
</dbReference>
<dbReference type="Pfam" id="PF01252">
    <property type="entry name" value="Peptidase_A8"/>
    <property type="match status" value="1"/>
</dbReference>
<dbReference type="PRINTS" id="PR00781">
    <property type="entry name" value="LIPOSIGPTASE"/>
</dbReference>
<dbReference type="PROSITE" id="PS00855">
    <property type="entry name" value="SPASE_II"/>
    <property type="match status" value="1"/>
</dbReference>
<proteinExistence type="inferred from homology"/>
<protein>
    <recommendedName>
        <fullName evidence="1">Lipoprotein signal peptidase</fullName>
        <ecNumber evidence="1">3.4.23.36</ecNumber>
    </recommendedName>
    <alternativeName>
        <fullName evidence="1">Prolipoprotein signal peptidase</fullName>
    </alternativeName>
    <alternativeName>
        <fullName evidence="1">Signal peptidase II</fullName>
        <shortName evidence="1">SPase II</shortName>
    </alternativeName>
</protein>
<organism>
    <name type="scientific">Burkholderia mallei (strain ATCC 23344)</name>
    <dbReference type="NCBI Taxonomy" id="243160"/>
    <lineage>
        <taxon>Bacteria</taxon>
        <taxon>Pseudomonadati</taxon>
        <taxon>Pseudomonadota</taxon>
        <taxon>Betaproteobacteria</taxon>
        <taxon>Burkholderiales</taxon>
        <taxon>Burkholderiaceae</taxon>
        <taxon>Burkholderia</taxon>
        <taxon>pseudomallei group</taxon>
    </lineage>
</organism>
<keyword id="KW-0064">Aspartyl protease</keyword>
<keyword id="KW-0997">Cell inner membrane</keyword>
<keyword id="KW-1003">Cell membrane</keyword>
<keyword id="KW-0378">Hydrolase</keyword>
<keyword id="KW-0472">Membrane</keyword>
<keyword id="KW-0645">Protease</keyword>
<keyword id="KW-1185">Reference proteome</keyword>
<keyword id="KW-0812">Transmembrane</keyword>
<keyword id="KW-1133">Transmembrane helix</keyword>
<name>LSPA_BURMA</name>
<reference key="1">
    <citation type="journal article" date="2004" name="Proc. Natl. Acad. Sci. U.S.A.">
        <title>Structural flexibility in the Burkholderia mallei genome.</title>
        <authorList>
            <person name="Nierman W.C."/>
            <person name="DeShazer D."/>
            <person name="Kim H.S."/>
            <person name="Tettelin H."/>
            <person name="Nelson K.E."/>
            <person name="Feldblyum T.V."/>
            <person name="Ulrich R.L."/>
            <person name="Ronning C.M."/>
            <person name="Brinkac L.M."/>
            <person name="Daugherty S.C."/>
            <person name="Davidsen T.D."/>
            <person name="DeBoy R.T."/>
            <person name="Dimitrov G."/>
            <person name="Dodson R.J."/>
            <person name="Durkin A.S."/>
            <person name="Gwinn M.L."/>
            <person name="Haft D.H."/>
            <person name="Khouri H.M."/>
            <person name="Kolonay J.F."/>
            <person name="Madupu R."/>
            <person name="Mohammoud Y."/>
            <person name="Nelson W.C."/>
            <person name="Radune D."/>
            <person name="Romero C.M."/>
            <person name="Sarria S."/>
            <person name="Selengut J."/>
            <person name="Shamblin C."/>
            <person name="Sullivan S.A."/>
            <person name="White O."/>
            <person name="Yu Y."/>
            <person name="Zafar N."/>
            <person name="Zhou L."/>
            <person name="Fraser C.M."/>
        </authorList>
    </citation>
    <scope>NUCLEOTIDE SEQUENCE [LARGE SCALE GENOMIC DNA]</scope>
    <source>
        <strain>ATCC 23344</strain>
    </source>
</reference>
<sequence length="166" mass="18099">MAKTLSKSSGGALAPWLGISLIVILFDQLTKIAVLKTFAYGAMHALTPFFNLTLIYNRGAAFGFLATAGGWQRWAFTALGIGATLVICYLLKRHGHQRLFSLSLALILGGALGNVIDRLIYGHVIDFLDFHVGAWHWPAFNLADSAITVGAVLLIYDELRRVRGAR</sequence>
<gene>
    <name evidence="1" type="primary">lspA</name>
    <name type="ordered locus">BMA2243</name>
</gene>
<accession>Q62HL3</accession>
<evidence type="ECO:0000255" key="1">
    <source>
        <dbReference type="HAMAP-Rule" id="MF_00161"/>
    </source>
</evidence>
<comment type="function">
    <text evidence="1">This protein specifically catalyzes the removal of signal peptides from prolipoproteins.</text>
</comment>
<comment type="catalytic activity">
    <reaction evidence="1">
        <text>Release of signal peptides from bacterial membrane prolipoproteins. Hydrolyzes -Xaa-Yaa-Zaa-|-(S,diacylglyceryl)Cys-, in which Xaa is hydrophobic (preferably Leu), and Yaa (Ala or Ser) and Zaa (Gly or Ala) have small, neutral side chains.</text>
        <dbReference type="EC" id="3.4.23.36"/>
    </reaction>
</comment>
<comment type="pathway">
    <text evidence="1">Protein modification; lipoprotein biosynthesis (signal peptide cleavage).</text>
</comment>
<comment type="subcellular location">
    <subcellularLocation>
        <location evidence="1">Cell inner membrane</location>
        <topology evidence="1">Multi-pass membrane protein</topology>
    </subcellularLocation>
</comment>
<comment type="similarity">
    <text evidence="1">Belongs to the peptidase A8 family.</text>
</comment>
<feature type="chain" id="PRO_1000038787" description="Lipoprotein signal peptidase">
    <location>
        <begin position="1"/>
        <end position="166"/>
    </location>
</feature>
<feature type="transmembrane region" description="Helical" evidence="1">
    <location>
        <begin position="10"/>
        <end position="30"/>
    </location>
</feature>
<feature type="transmembrane region" description="Helical" evidence="1">
    <location>
        <begin position="32"/>
        <end position="52"/>
    </location>
</feature>
<feature type="transmembrane region" description="Helical" evidence="1">
    <location>
        <begin position="71"/>
        <end position="91"/>
    </location>
</feature>
<feature type="transmembrane region" description="Helical" evidence="1">
    <location>
        <begin position="100"/>
        <end position="120"/>
    </location>
</feature>
<feature type="transmembrane region" description="Helical" evidence="1">
    <location>
        <begin position="135"/>
        <end position="155"/>
    </location>
</feature>
<feature type="active site" evidence="1">
    <location>
        <position position="126"/>
    </location>
</feature>
<feature type="active site" evidence="1">
    <location>
        <position position="144"/>
    </location>
</feature>